<feature type="chain" id="PRO_0000383959" description="Lactate utilization protein B">
    <location>
        <begin position="1"/>
        <end position="473"/>
    </location>
</feature>
<feature type="domain" description="4Fe-4S ferredoxin-type 1" evidence="1">
    <location>
        <begin position="302"/>
        <end position="332"/>
    </location>
</feature>
<feature type="domain" description="4Fe-4S ferredoxin-type 2" evidence="1">
    <location>
        <begin position="351"/>
        <end position="380"/>
    </location>
</feature>
<feature type="binding site" evidence="1">
    <location>
        <position position="311"/>
    </location>
    <ligand>
        <name>[4Fe-4S] cluster</name>
        <dbReference type="ChEBI" id="CHEBI:49883"/>
        <label>1</label>
    </ligand>
</feature>
<feature type="binding site" evidence="1">
    <location>
        <position position="314"/>
    </location>
    <ligand>
        <name>[4Fe-4S] cluster</name>
        <dbReference type="ChEBI" id="CHEBI:49883"/>
        <label>1</label>
    </ligand>
</feature>
<feature type="binding site" evidence="1">
    <location>
        <position position="317"/>
    </location>
    <ligand>
        <name>[4Fe-4S] cluster</name>
        <dbReference type="ChEBI" id="CHEBI:49883"/>
        <label>1</label>
    </ligand>
</feature>
<feature type="binding site" evidence="1">
    <location>
        <position position="321"/>
    </location>
    <ligand>
        <name>[4Fe-4S] cluster</name>
        <dbReference type="ChEBI" id="CHEBI:49883"/>
        <label>2</label>
    </ligand>
</feature>
<feature type="binding site" evidence="1">
    <location>
        <position position="364"/>
    </location>
    <ligand>
        <name>[4Fe-4S] cluster</name>
        <dbReference type="ChEBI" id="CHEBI:49883"/>
        <label>2</label>
    </ligand>
</feature>
<feature type="binding site" evidence="1">
    <location>
        <position position="367"/>
    </location>
    <ligand>
        <name>[4Fe-4S] cluster</name>
        <dbReference type="ChEBI" id="CHEBI:49883"/>
        <label>2</label>
    </ligand>
</feature>
<feature type="binding site" evidence="1">
    <location>
        <position position="371"/>
    </location>
    <ligand>
        <name>[4Fe-4S] cluster</name>
        <dbReference type="ChEBI" id="CHEBI:49883"/>
        <label>1</label>
    </ligand>
</feature>
<organism>
    <name type="scientific">Bacillus anthracis (strain A0248)</name>
    <dbReference type="NCBI Taxonomy" id="592021"/>
    <lineage>
        <taxon>Bacteria</taxon>
        <taxon>Bacillati</taxon>
        <taxon>Bacillota</taxon>
        <taxon>Bacilli</taxon>
        <taxon>Bacillales</taxon>
        <taxon>Bacillaceae</taxon>
        <taxon>Bacillus</taxon>
        <taxon>Bacillus cereus group</taxon>
    </lineage>
</organism>
<gene>
    <name evidence="1" type="primary">lutB</name>
    <name type="ordered locus">BAA_1383</name>
</gene>
<name>LUTB_BACAA</name>
<accession>C3P4C4</accession>
<proteinExistence type="inferred from homology"/>
<reference key="1">
    <citation type="submission" date="2009-04" db="EMBL/GenBank/DDBJ databases">
        <title>Genome sequence of Bacillus anthracis A0248.</title>
        <authorList>
            <person name="Dodson R.J."/>
            <person name="Munk A.C."/>
            <person name="Bruce D."/>
            <person name="Detter C."/>
            <person name="Tapia R."/>
            <person name="Sutton G."/>
            <person name="Sims D."/>
            <person name="Brettin T."/>
        </authorList>
    </citation>
    <scope>NUCLEOTIDE SEQUENCE [LARGE SCALE GENOMIC DNA]</scope>
    <source>
        <strain>A0248</strain>
    </source>
</reference>
<protein>
    <recommendedName>
        <fullName evidence="1">Lactate utilization protein B</fullName>
    </recommendedName>
</protein>
<keyword id="KW-0004">4Fe-4S</keyword>
<keyword id="KW-0249">Electron transport</keyword>
<keyword id="KW-0408">Iron</keyword>
<keyword id="KW-0411">Iron-sulfur</keyword>
<keyword id="KW-0479">Metal-binding</keyword>
<keyword id="KW-0677">Repeat</keyword>
<keyword id="KW-0813">Transport</keyword>
<evidence type="ECO:0000255" key="1">
    <source>
        <dbReference type="HAMAP-Rule" id="MF_02103"/>
    </source>
</evidence>
<sequence>MSMKISEKKFNDRVGDGIQDSFMRGAVSSAQTRLYTNRLKAADELGNWEEWRELGEEIRQHTLENLDYYLMQLSENVSKRGGHVYFAKTKEEAAKYIQDVAKKKQAKKVVKSKSMVTEEISMNHALEEIGCEVLESDLGEYILQVDNDPPSHIIAPALHKNRTQIRDVFKEKLGYENSDDPYEMTKFVRKQLREKFMDAEIGVTGCNFAVANTGSLCLVTNEGNADLVMSIPKTQIAVMGMERMVPTMEELDVLVGLLCRSAVGQKLTSYVTVAGPIQEEEVDGPEEFHLVVVDNGRSQILGSEFRQVLQCIRCAACVNVCPVYRHVGGHSYGSIYSGPIGAVLTPLLGGYDDYKELPYASSLCGACTEACPVKIPLHDLLLKHRQVIVEQEGRAPLAEKLAMKMFSMGASSAALYKMGSKMAPAAMSPFTSGNRVSKGVGPLKNWTDIREFPAPSKERFRDWYKDHKKGGDK</sequence>
<dbReference type="EMBL" id="CP001598">
    <property type="protein sequence ID" value="ACQ46467.1"/>
    <property type="molecule type" value="Genomic_DNA"/>
</dbReference>
<dbReference type="RefSeq" id="WP_000061914.1">
    <property type="nucleotide sequence ID" value="NC_012659.1"/>
</dbReference>
<dbReference type="KEGG" id="bai:BAA_1383"/>
<dbReference type="HOGENOM" id="CLU_027059_2_0_9"/>
<dbReference type="GO" id="GO:0051539">
    <property type="term" value="F:4 iron, 4 sulfur cluster binding"/>
    <property type="evidence" value="ECO:0007669"/>
    <property type="project" value="UniProtKB-KW"/>
</dbReference>
<dbReference type="GO" id="GO:0046872">
    <property type="term" value="F:metal ion binding"/>
    <property type="evidence" value="ECO:0007669"/>
    <property type="project" value="UniProtKB-KW"/>
</dbReference>
<dbReference type="GO" id="GO:0006089">
    <property type="term" value="P:lactate metabolic process"/>
    <property type="evidence" value="ECO:0007669"/>
    <property type="project" value="UniProtKB-UniRule"/>
</dbReference>
<dbReference type="Gene3D" id="1.10.1060.10">
    <property type="entry name" value="Alpha-helical ferredoxin"/>
    <property type="match status" value="1"/>
</dbReference>
<dbReference type="Gene3D" id="3.40.50.10420">
    <property type="entry name" value="NagB/RpiA/CoA transferase-like"/>
    <property type="match status" value="1"/>
</dbReference>
<dbReference type="HAMAP" id="MF_02103">
    <property type="entry name" value="LutB"/>
    <property type="match status" value="1"/>
</dbReference>
<dbReference type="InterPro" id="IPR017896">
    <property type="entry name" value="4Fe4S_Fe-S-bd"/>
</dbReference>
<dbReference type="InterPro" id="IPR017900">
    <property type="entry name" value="4Fe4S_Fe_S_CS"/>
</dbReference>
<dbReference type="InterPro" id="IPR024185">
    <property type="entry name" value="FTHF_cligase-like_sf"/>
</dbReference>
<dbReference type="InterPro" id="IPR009051">
    <property type="entry name" value="Helical_ferredxn"/>
</dbReference>
<dbReference type="InterPro" id="IPR003741">
    <property type="entry name" value="LUD_dom"/>
</dbReference>
<dbReference type="InterPro" id="IPR022825">
    <property type="entry name" value="LutB"/>
</dbReference>
<dbReference type="InterPro" id="IPR004452">
    <property type="entry name" value="LutB/LldF"/>
</dbReference>
<dbReference type="InterPro" id="IPR024569">
    <property type="entry name" value="LutB_C"/>
</dbReference>
<dbReference type="InterPro" id="IPR037171">
    <property type="entry name" value="NagB/RpiA_transferase-like"/>
</dbReference>
<dbReference type="NCBIfam" id="TIGR00273">
    <property type="entry name" value="LutB/LldF family L-lactate oxidation iron-sulfur protein"/>
    <property type="match status" value="1"/>
</dbReference>
<dbReference type="PANTHER" id="PTHR47153">
    <property type="entry name" value="LACTATE UTILIZATION PROTEIN B"/>
    <property type="match status" value="1"/>
</dbReference>
<dbReference type="PANTHER" id="PTHR47153:SF2">
    <property type="entry name" value="LACTATE UTILIZATION PROTEIN B"/>
    <property type="match status" value="1"/>
</dbReference>
<dbReference type="Pfam" id="PF13183">
    <property type="entry name" value="Fer4_8"/>
    <property type="match status" value="1"/>
</dbReference>
<dbReference type="Pfam" id="PF02589">
    <property type="entry name" value="LUD_dom"/>
    <property type="match status" value="1"/>
</dbReference>
<dbReference type="Pfam" id="PF11870">
    <property type="entry name" value="LutB_C"/>
    <property type="match status" value="1"/>
</dbReference>
<dbReference type="SUPFAM" id="SSF46548">
    <property type="entry name" value="alpha-helical ferredoxin"/>
    <property type="match status" value="1"/>
</dbReference>
<dbReference type="SUPFAM" id="SSF100950">
    <property type="entry name" value="NagB/RpiA/CoA transferase-like"/>
    <property type="match status" value="1"/>
</dbReference>
<dbReference type="PROSITE" id="PS00198">
    <property type="entry name" value="4FE4S_FER_1"/>
    <property type="match status" value="1"/>
</dbReference>
<comment type="function">
    <text evidence="1">Is involved in L-lactate degradation and allows cells to grow with lactate as the sole carbon source. Has probably a role as an electron transporter during oxidation of L-lactate.</text>
</comment>
<comment type="similarity">
    <text evidence="1">Belongs to the LutB/YkgF family.</text>
</comment>